<protein>
    <recommendedName>
        <fullName>Protocadherin-16</fullName>
    </recommendedName>
    <alternativeName>
        <fullName>Cadherin-19</fullName>
    </alternativeName>
    <alternativeName>
        <fullName>Cadherin-25</fullName>
    </alternativeName>
    <alternativeName>
        <fullName>Fibroblast cadherin-1</fullName>
    </alternativeName>
    <alternativeName>
        <fullName>Protein dachsous homolog 1</fullName>
    </alternativeName>
</protein>
<organism>
    <name type="scientific">Homo sapiens</name>
    <name type="common">Human</name>
    <dbReference type="NCBI Taxonomy" id="9606"/>
    <lineage>
        <taxon>Eukaryota</taxon>
        <taxon>Metazoa</taxon>
        <taxon>Chordata</taxon>
        <taxon>Craniata</taxon>
        <taxon>Vertebrata</taxon>
        <taxon>Euteleostomi</taxon>
        <taxon>Mammalia</taxon>
        <taxon>Eutheria</taxon>
        <taxon>Euarchontoglires</taxon>
        <taxon>Primates</taxon>
        <taxon>Haplorrhini</taxon>
        <taxon>Catarrhini</taxon>
        <taxon>Hominidae</taxon>
        <taxon>Homo</taxon>
    </lineage>
</organism>
<proteinExistence type="evidence at protein level"/>
<gene>
    <name type="primary">DCHS1</name>
    <name type="synonym">CDH19</name>
    <name type="synonym">CDH25</name>
    <name type="synonym">FIB1</name>
    <name type="synonym">KIAA1773</name>
    <name type="synonym">PCDH16</name>
</gene>
<reference key="1">
    <citation type="journal article" date="2001" name="Brain Res. Mol. Brain Res.">
        <title>Identification of three novel non-classical cadherin genes through comprehensive analysis of large cDNAs.</title>
        <authorList>
            <person name="Nakajima D."/>
            <person name="Nakayama M."/>
            <person name="Kikuno R."/>
            <person name="Hirosawa M."/>
            <person name="Nagase T."/>
            <person name="Ohara O."/>
        </authorList>
    </citation>
    <scope>NUCLEOTIDE SEQUENCE [MRNA]</scope>
    <source>
        <tissue>Brain</tissue>
    </source>
</reference>
<reference key="2">
    <citation type="submission" date="2005-08" db="EMBL/GenBank/DDBJ databases">
        <authorList>
            <person name="Nakajima D."/>
            <person name="Nakayama M."/>
            <person name="Kikuno R."/>
            <person name="Nagase T."/>
            <person name="Ohara O."/>
        </authorList>
    </citation>
    <scope>SEQUENCE REVISION</scope>
</reference>
<reference key="3">
    <citation type="journal article" date="1997" name="Biochem. Biophys. Res. Commun.">
        <title>Multiple cadherins are expressed in human fibroblasts.</title>
        <authorList>
            <person name="Matsuyoshi N."/>
            <person name="Imamura S."/>
        </authorList>
    </citation>
    <scope>NUCLEOTIDE SEQUENCE [MRNA] OF 434-570</scope>
    <scope>TISSUE SPECIFICITY</scope>
</reference>
<reference key="4">
    <citation type="journal article" date="2015" name="Nature">
        <title>Mutations in DCHS1 cause mitral valve prolapse.</title>
        <authorList>
            <person name="Durst R."/>
            <person name="Sauls K."/>
            <person name="Peal D.S."/>
            <person name="deVlaming A."/>
            <person name="Toomer K."/>
            <person name="Leyne M."/>
            <person name="Salani M."/>
            <person name="Talkowski M.E."/>
            <person name="Brand H."/>
            <person name="Perrocheau M."/>
            <person name="Simpson C."/>
            <person name="Jett C."/>
            <person name="Stone M.R."/>
            <person name="Charles F."/>
            <person name="Chiang C."/>
            <person name="Lynch S.N."/>
            <person name="Bouatia-Naji N."/>
            <person name="Delling F.N."/>
            <person name="Freed L.A."/>
            <person name="Tribouilloy C."/>
            <person name="Le Tourneau T."/>
            <person name="LeMarec H."/>
            <person name="Fernandez-Friera L."/>
            <person name="Solis J."/>
            <person name="Trujillano D."/>
            <person name="Ossowski S."/>
            <person name="Estivill X."/>
            <person name="Dina C."/>
            <person name="Bruneval P."/>
            <person name="Chester A."/>
            <person name="Schott J.J."/>
            <person name="Irvine K.D."/>
            <person name="Mao Y."/>
            <person name="Wessels A."/>
            <person name="Motiwala T."/>
            <person name="Puceat M."/>
            <person name="Tsukasaki Y."/>
            <person name="Menick D.R."/>
            <person name="Kasiganesan H."/>
            <person name="Nie X."/>
            <person name="Broome A.M."/>
            <person name="Williams K."/>
            <person name="Johnson A."/>
            <person name="Markwald R.R."/>
            <person name="Jeunemaitre X."/>
            <person name="Hagege A."/>
            <person name="Levine R.A."/>
            <person name="Milan D.J."/>
            <person name="Norris R.A."/>
            <person name="Slaugenhaupt S.A."/>
        </authorList>
    </citation>
    <scope>FUNCTION</scope>
    <scope>INVOLVEMENT IN MVP2</scope>
    <scope>VARIANTS MVP2 LEU-197; CYS-2330 AND HIS-2513</scope>
    <scope>CHARACTERIZATION OF VARIANTS MVP2 LEU-197; CYS-2330 AND HIS-2513</scope>
</reference>
<reference key="5">
    <citation type="journal article" date="2006" name="Science">
        <title>The consensus coding sequences of human breast and colorectal cancers.</title>
        <authorList>
            <person name="Sjoeblom T."/>
            <person name="Jones S."/>
            <person name="Wood L.D."/>
            <person name="Parsons D.W."/>
            <person name="Lin J."/>
            <person name="Barber T.D."/>
            <person name="Mandelker D."/>
            <person name="Leary R.J."/>
            <person name="Ptak J."/>
            <person name="Silliman N."/>
            <person name="Szabo S."/>
            <person name="Buckhaults P."/>
            <person name="Farrell C."/>
            <person name="Meeh P."/>
            <person name="Markowitz S.D."/>
            <person name="Willis J."/>
            <person name="Dawson D."/>
            <person name="Willson J.K.V."/>
            <person name="Gazdar A.F."/>
            <person name="Hartigan J."/>
            <person name="Wu L."/>
            <person name="Liu C."/>
            <person name="Parmigiani G."/>
            <person name="Park B.H."/>
            <person name="Bachman K.E."/>
            <person name="Papadopoulos N."/>
            <person name="Vogelstein B."/>
            <person name="Kinzler K.W."/>
            <person name="Velculescu V.E."/>
        </authorList>
    </citation>
    <scope>VARIANT [LARGE SCALE ANALYSIS] TRP-1583</scope>
</reference>
<reference key="6">
    <citation type="journal article" date="2013" name="Nat. Genet.">
        <title>Mutations in genes encoding the cadherin receptor-ligand pair DCHS1 and FAT4 disrupt cerebral cortical development.</title>
        <authorList>
            <person name="Cappello S."/>
            <person name="Gray M.J."/>
            <person name="Badouel C."/>
            <person name="Lange S."/>
            <person name="Einsiedler M."/>
            <person name="Srour M."/>
            <person name="Chitayat D."/>
            <person name="Hamdan F.F."/>
            <person name="Jenkins Z.A."/>
            <person name="Morgan T."/>
            <person name="Preitner N."/>
            <person name="Uster T."/>
            <person name="Thomas J."/>
            <person name="Shannon P."/>
            <person name="Morrison V."/>
            <person name="Di Donato N."/>
            <person name="Van Maldergem L."/>
            <person name="Neuhann T."/>
            <person name="Newbury-Ecob R."/>
            <person name="Swinkells M."/>
            <person name="Terhal P."/>
            <person name="Wilson L.C."/>
            <person name="Zwijnenburg P.J."/>
            <person name="Sutherland-Smith A.J."/>
            <person name="Black M.A."/>
            <person name="Markie D."/>
            <person name="Michaud J.L."/>
            <person name="Simpson M.A."/>
            <person name="Mansour S."/>
            <person name="McNeill H."/>
            <person name="Goetz M."/>
            <person name="Robertson S.P."/>
        </authorList>
    </citation>
    <scope>VARIANT VMLDS1 ILE-2370</scope>
</reference>
<dbReference type="EMBL" id="AB053446">
    <property type="protein sequence ID" value="BAB61903.2"/>
    <property type="status" value="ALT_INIT"/>
    <property type="molecule type" value="mRNA"/>
</dbReference>
<dbReference type="EMBL" id="AB000895">
    <property type="protein sequence ID" value="BAA21133.1"/>
    <property type="molecule type" value="mRNA"/>
</dbReference>
<dbReference type="CCDS" id="CCDS7771.1"/>
<dbReference type="PIR" id="PC4297">
    <property type="entry name" value="PC4297"/>
</dbReference>
<dbReference type="RefSeq" id="NP_003728.1">
    <property type="nucleotide sequence ID" value="NM_003737.4"/>
</dbReference>
<dbReference type="PDB" id="8EGW">
    <property type="method" value="X-ray"/>
    <property type="resolution" value="2.30 A"/>
    <property type="chains" value="A=43-356"/>
</dbReference>
<dbReference type="PDB" id="8EGX">
    <property type="method" value="X-ray"/>
    <property type="resolution" value="3.69 A"/>
    <property type="chains" value="A=43-462"/>
</dbReference>
<dbReference type="PDBsum" id="8EGW"/>
<dbReference type="PDBsum" id="8EGX"/>
<dbReference type="SMR" id="Q96JQ0"/>
<dbReference type="BioGRID" id="114194">
    <property type="interactions" value="18"/>
</dbReference>
<dbReference type="FunCoup" id="Q96JQ0">
    <property type="interactions" value="145"/>
</dbReference>
<dbReference type="IntAct" id="Q96JQ0">
    <property type="interactions" value="17"/>
</dbReference>
<dbReference type="MINT" id="Q96JQ0"/>
<dbReference type="STRING" id="9606.ENSP00000299441"/>
<dbReference type="GlyCosmos" id="Q96JQ0">
    <property type="glycosylation" value="14 sites, No reported glycans"/>
</dbReference>
<dbReference type="GlyGen" id="Q96JQ0">
    <property type="glycosylation" value="16 sites, 16 N-linked glycans (5 sites)"/>
</dbReference>
<dbReference type="iPTMnet" id="Q96JQ0"/>
<dbReference type="PhosphoSitePlus" id="Q96JQ0"/>
<dbReference type="BioMuta" id="DCHS1"/>
<dbReference type="DMDM" id="20139065"/>
<dbReference type="jPOST" id="Q96JQ0"/>
<dbReference type="MassIVE" id="Q96JQ0"/>
<dbReference type="PaxDb" id="9606-ENSP00000299441"/>
<dbReference type="PeptideAtlas" id="Q96JQ0"/>
<dbReference type="ProteomicsDB" id="77003"/>
<dbReference type="Antibodypedia" id="64000">
    <property type="antibodies" value="68 antibodies from 16 providers"/>
</dbReference>
<dbReference type="DNASU" id="8642"/>
<dbReference type="Ensembl" id="ENST00000299441.5">
    <property type="protein sequence ID" value="ENSP00000299441.3"/>
    <property type="gene ID" value="ENSG00000166341.9"/>
</dbReference>
<dbReference type="GeneID" id="8642"/>
<dbReference type="KEGG" id="hsa:8642"/>
<dbReference type="MANE-Select" id="ENST00000299441.5">
    <property type="protein sequence ID" value="ENSP00000299441.3"/>
    <property type="RefSeq nucleotide sequence ID" value="NM_003737.4"/>
    <property type="RefSeq protein sequence ID" value="NP_003728.1"/>
</dbReference>
<dbReference type="UCSC" id="uc001mem.3">
    <property type="organism name" value="human"/>
</dbReference>
<dbReference type="AGR" id="HGNC:13681"/>
<dbReference type="CTD" id="8642"/>
<dbReference type="DisGeNET" id="8642"/>
<dbReference type="GeneCards" id="DCHS1"/>
<dbReference type="HGNC" id="HGNC:13681">
    <property type="gene designation" value="DCHS1"/>
</dbReference>
<dbReference type="HPA" id="ENSG00000166341">
    <property type="expression patterns" value="Low tissue specificity"/>
</dbReference>
<dbReference type="MalaCards" id="DCHS1"/>
<dbReference type="MIM" id="601390">
    <property type="type" value="phenotype"/>
</dbReference>
<dbReference type="MIM" id="603057">
    <property type="type" value="gene"/>
</dbReference>
<dbReference type="MIM" id="607829">
    <property type="type" value="phenotype"/>
</dbReference>
<dbReference type="neXtProt" id="NX_Q96JQ0"/>
<dbReference type="OpenTargets" id="ENSG00000166341"/>
<dbReference type="Orphanet" id="314679">
    <property type="disease" value="Cerebrofacioarticular syndrome"/>
</dbReference>
<dbReference type="Orphanet" id="741">
    <property type="disease" value="Familial mitral valve prolapse"/>
</dbReference>
<dbReference type="PharmGKB" id="PA33000"/>
<dbReference type="VEuPathDB" id="HostDB:ENSG00000166341"/>
<dbReference type="eggNOG" id="KOG3594">
    <property type="taxonomic scope" value="Eukaryota"/>
</dbReference>
<dbReference type="GeneTree" id="ENSGT00940000161822"/>
<dbReference type="HOGENOM" id="CLU_000265_2_0_1"/>
<dbReference type="InParanoid" id="Q96JQ0"/>
<dbReference type="OMA" id="STCQIRI"/>
<dbReference type="OrthoDB" id="6252479at2759"/>
<dbReference type="PAN-GO" id="Q96JQ0">
    <property type="GO annotations" value="9 GO annotations based on evolutionary models"/>
</dbReference>
<dbReference type="PhylomeDB" id="Q96JQ0"/>
<dbReference type="TreeFam" id="TF316403"/>
<dbReference type="PathwayCommons" id="Q96JQ0"/>
<dbReference type="SignaLink" id="Q96JQ0"/>
<dbReference type="BioGRID-ORCS" id="8642">
    <property type="hits" value="11 hits in 1146 CRISPR screens"/>
</dbReference>
<dbReference type="ChiTaRS" id="DCHS1">
    <property type="organism name" value="human"/>
</dbReference>
<dbReference type="GeneWiki" id="DCHS1"/>
<dbReference type="GenomeRNAi" id="8642"/>
<dbReference type="Pharos" id="Q96JQ0">
    <property type="development level" value="Tbio"/>
</dbReference>
<dbReference type="PRO" id="PR:Q96JQ0"/>
<dbReference type="Proteomes" id="UP000005640">
    <property type="component" value="Chromosome 11"/>
</dbReference>
<dbReference type="RNAct" id="Q96JQ0">
    <property type="molecule type" value="protein"/>
</dbReference>
<dbReference type="Bgee" id="ENSG00000166341">
    <property type="expression patterns" value="Expressed in tendon of biceps brachii and 185 other cell types or tissues"/>
</dbReference>
<dbReference type="GO" id="GO:0045177">
    <property type="term" value="C:apical part of cell"/>
    <property type="evidence" value="ECO:0007669"/>
    <property type="project" value="Ensembl"/>
</dbReference>
<dbReference type="GO" id="GO:0016342">
    <property type="term" value="C:catenin complex"/>
    <property type="evidence" value="ECO:0000318"/>
    <property type="project" value="GO_Central"/>
</dbReference>
<dbReference type="GO" id="GO:0016020">
    <property type="term" value="C:membrane"/>
    <property type="evidence" value="ECO:0000303"/>
    <property type="project" value="UniProtKB"/>
</dbReference>
<dbReference type="GO" id="GO:0008013">
    <property type="term" value="F:beta-catenin binding"/>
    <property type="evidence" value="ECO:0000318"/>
    <property type="project" value="GO_Central"/>
</dbReference>
<dbReference type="GO" id="GO:0045296">
    <property type="term" value="F:cadherin binding"/>
    <property type="evidence" value="ECO:0000318"/>
    <property type="project" value="GO_Central"/>
</dbReference>
<dbReference type="GO" id="GO:0005509">
    <property type="term" value="F:calcium ion binding"/>
    <property type="evidence" value="ECO:0007669"/>
    <property type="project" value="InterPro"/>
</dbReference>
<dbReference type="GO" id="GO:0001658">
    <property type="term" value="P:branching involved in ureteric bud morphogenesis"/>
    <property type="evidence" value="ECO:0007669"/>
    <property type="project" value="Ensembl"/>
</dbReference>
<dbReference type="GO" id="GO:0016339">
    <property type="term" value="P:calcium-dependent cell-cell adhesion via plasma membrane cell adhesion molecules"/>
    <property type="evidence" value="ECO:0000303"/>
    <property type="project" value="UniProtKB"/>
</dbReference>
<dbReference type="GO" id="GO:0016477">
    <property type="term" value="P:cell migration"/>
    <property type="evidence" value="ECO:0000318"/>
    <property type="project" value="GO_Central"/>
</dbReference>
<dbReference type="GO" id="GO:0003273">
    <property type="term" value="P:cell migration involved in endocardial cushion formation"/>
    <property type="evidence" value="ECO:0000315"/>
    <property type="project" value="UniProtKB"/>
</dbReference>
<dbReference type="GO" id="GO:0098742">
    <property type="term" value="P:cell-cell adhesion via plasma-membrane adhesion molecules"/>
    <property type="evidence" value="ECO:0000318"/>
    <property type="project" value="GO_Central"/>
</dbReference>
<dbReference type="GO" id="GO:0090102">
    <property type="term" value="P:cochlea development"/>
    <property type="evidence" value="ECO:0007669"/>
    <property type="project" value="Ensembl"/>
</dbReference>
<dbReference type="GO" id="GO:0072137">
    <property type="term" value="P:condensed mesenchymal cell proliferation"/>
    <property type="evidence" value="ECO:0007669"/>
    <property type="project" value="Ensembl"/>
</dbReference>
<dbReference type="GO" id="GO:0048565">
    <property type="term" value="P:digestive tract development"/>
    <property type="evidence" value="ECO:0007669"/>
    <property type="project" value="Ensembl"/>
</dbReference>
<dbReference type="GO" id="GO:0010467">
    <property type="term" value="P:gene expression"/>
    <property type="evidence" value="ECO:0007669"/>
    <property type="project" value="Ensembl"/>
</dbReference>
<dbReference type="GO" id="GO:0007157">
    <property type="term" value="P:heterophilic cell-cell adhesion via plasma membrane cell adhesion molecules"/>
    <property type="evidence" value="ECO:0000250"/>
    <property type="project" value="UniProtKB"/>
</dbReference>
<dbReference type="GO" id="GO:0035329">
    <property type="term" value="P:hippo signaling"/>
    <property type="evidence" value="ECO:0000250"/>
    <property type="project" value="UniProtKB"/>
</dbReference>
<dbReference type="GO" id="GO:0007156">
    <property type="term" value="P:homophilic cell adhesion via plasma membrane adhesion molecules"/>
    <property type="evidence" value="ECO:0007669"/>
    <property type="project" value="InterPro"/>
</dbReference>
<dbReference type="GO" id="GO:0003192">
    <property type="term" value="P:mitral valve formation"/>
    <property type="evidence" value="ECO:0000315"/>
    <property type="project" value="UniProtKB"/>
</dbReference>
<dbReference type="GO" id="GO:0021915">
    <property type="term" value="P:neural tube development"/>
    <property type="evidence" value="ECO:0007669"/>
    <property type="project" value="Ensembl"/>
</dbReference>
<dbReference type="GO" id="GO:0022008">
    <property type="term" value="P:neurogenesis"/>
    <property type="evidence" value="ECO:0000250"/>
    <property type="project" value="UniProtKB"/>
</dbReference>
<dbReference type="GO" id="GO:0043931">
    <property type="term" value="P:ossification involved in bone maturation"/>
    <property type="evidence" value="ECO:0007669"/>
    <property type="project" value="Ensembl"/>
</dbReference>
<dbReference type="GO" id="GO:0007389">
    <property type="term" value="P:pattern specification process"/>
    <property type="evidence" value="ECO:0007669"/>
    <property type="project" value="Ensembl"/>
</dbReference>
<dbReference type="GO" id="GO:0036342">
    <property type="term" value="P:post-anal tail morphogenesis"/>
    <property type="evidence" value="ECO:0007669"/>
    <property type="project" value="Ensembl"/>
</dbReference>
<dbReference type="GO" id="GO:0072659">
    <property type="term" value="P:protein localization to plasma membrane"/>
    <property type="evidence" value="ECO:0007669"/>
    <property type="project" value="Ensembl"/>
</dbReference>
<dbReference type="GO" id="GO:0032185">
    <property type="term" value="P:septin cytoskeleton organization"/>
    <property type="evidence" value="ECO:0007669"/>
    <property type="project" value="Ensembl"/>
</dbReference>
<dbReference type="CDD" id="cd11304">
    <property type="entry name" value="Cadherin_repeat"/>
    <property type="match status" value="27"/>
</dbReference>
<dbReference type="FunFam" id="2.60.40.60:FF:000104">
    <property type="entry name" value="cadherin-23 isoform X1"/>
    <property type="match status" value="1"/>
</dbReference>
<dbReference type="FunFam" id="2.60.40.60:FF:000140">
    <property type="entry name" value="Dachsous cadherin-related 1"/>
    <property type="match status" value="1"/>
</dbReference>
<dbReference type="FunFam" id="2.60.40.60:FF:000150">
    <property type="entry name" value="Dachsous cadherin-related 1"/>
    <property type="match status" value="1"/>
</dbReference>
<dbReference type="FunFam" id="2.60.40.60:FF:000158">
    <property type="entry name" value="Dachsous cadherin-related 1"/>
    <property type="match status" value="1"/>
</dbReference>
<dbReference type="FunFam" id="2.60.40.60:FF:000201">
    <property type="entry name" value="Dachsous cadherin-related 1"/>
    <property type="match status" value="1"/>
</dbReference>
<dbReference type="FunFam" id="2.60.40.60:FF:000214">
    <property type="entry name" value="Dachsous cadherin-related 1"/>
    <property type="match status" value="1"/>
</dbReference>
<dbReference type="FunFam" id="2.60.40.60:FF:000225">
    <property type="entry name" value="Dachsous cadherin-related 1"/>
    <property type="match status" value="1"/>
</dbReference>
<dbReference type="FunFam" id="2.60.40.60:FF:000235">
    <property type="entry name" value="Dachsous cadherin-related 1"/>
    <property type="match status" value="1"/>
</dbReference>
<dbReference type="FunFam" id="2.60.40.60:FF:000254">
    <property type="entry name" value="Dachsous cadherin-related 1"/>
    <property type="match status" value="1"/>
</dbReference>
<dbReference type="FunFam" id="2.60.40.60:FF:000020">
    <property type="entry name" value="Dachsous cadherin-related 1b"/>
    <property type="match status" value="11"/>
</dbReference>
<dbReference type="FunFam" id="2.60.40.60:FF:000102">
    <property type="entry name" value="Dachsous cadherin-related 1b"/>
    <property type="match status" value="1"/>
</dbReference>
<dbReference type="FunFam" id="2.60.40.60:FF:000153">
    <property type="entry name" value="Dachsous cadherin-related 2"/>
    <property type="match status" value="1"/>
</dbReference>
<dbReference type="FunFam" id="2.60.40.60:FF:000007">
    <property type="entry name" value="Protocadherin alpha 2"/>
    <property type="match status" value="1"/>
</dbReference>
<dbReference type="FunFam" id="2.60.40.60:FF:000035">
    <property type="entry name" value="Protocadherin Fat 3"/>
    <property type="match status" value="2"/>
</dbReference>
<dbReference type="FunFam" id="2.60.40.60:FF:000081">
    <property type="entry name" value="protocadherin Fat 4"/>
    <property type="match status" value="1"/>
</dbReference>
<dbReference type="FunFam" id="2.60.40.60:FF:000060">
    <property type="entry name" value="Putative cadherin-23"/>
    <property type="match status" value="1"/>
</dbReference>
<dbReference type="Gene3D" id="2.60.40.60">
    <property type="entry name" value="Cadherins"/>
    <property type="match status" value="27"/>
</dbReference>
<dbReference type="InterPro" id="IPR050971">
    <property type="entry name" value="Cadherin-domain_protein"/>
</dbReference>
<dbReference type="InterPro" id="IPR002126">
    <property type="entry name" value="Cadherin-like_dom"/>
</dbReference>
<dbReference type="InterPro" id="IPR015919">
    <property type="entry name" value="Cadherin-like_sf"/>
</dbReference>
<dbReference type="InterPro" id="IPR020894">
    <property type="entry name" value="Cadherin_CS"/>
</dbReference>
<dbReference type="PANTHER" id="PTHR24025:SF22">
    <property type="entry name" value="CADHERIN DOMAIN-CONTAINING PROTEIN"/>
    <property type="match status" value="1"/>
</dbReference>
<dbReference type="PANTHER" id="PTHR24025">
    <property type="entry name" value="DESMOGLEIN FAMILY MEMBER"/>
    <property type="match status" value="1"/>
</dbReference>
<dbReference type="Pfam" id="PF00028">
    <property type="entry name" value="Cadherin"/>
    <property type="match status" value="24"/>
</dbReference>
<dbReference type="PRINTS" id="PR00205">
    <property type="entry name" value="CADHERIN"/>
</dbReference>
<dbReference type="SMART" id="SM00112">
    <property type="entry name" value="CA"/>
    <property type="match status" value="27"/>
</dbReference>
<dbReference type="SUPFAM" id="SSF49313">
    <property type="entry name" value="Cadherin-like"/>
    <property type="match status" value="27"/>
</dbReference>
<dbReference type="PROSITE" id="PS00232">
    <property type="entry name" value="CADHERIN_1"/>
    <property type="match status" value="18"/>
</dbReference>
<dbReference type="PROSITE" id="PS50268">
    <property type="entry name" value="CADHERIN_2"/>
    <property type="match status" value="27"/>
</dbReference>
<accession>Q96JQ0</accession>
<accession>O15098</accession>
<comment type="function">
    <text evidence="8">Calcium-dependent cell-adhesion protein. Mediates functions in neuroprogenitor cell proliferation and differentiation. In the heart, has a critical role for proper morphogenesis of the mitral valve, acting in the regulation of cell migration involved in valve formation (PubMed:26258302).</text>
</comment>
<comment type="subunit">
    <text evidence="1">Heterophilic interaction with FAT4; this interaction affects their respective protein levels.</text>
</comment>
<comment type="subcellular location">
    <subcellularLocation>
        <location evidence="1">Cell membrane</location>
        <topology evidence="1">Single-pass type I membrane protein</topology>
    </subcellularLocation>
    <text evidence="1">In the embryonic cortex, FAT4 and DCHS1 accumulated at the cell-cell boundaries located apical to the adherens junction.</text>
</comment>
<comment type="tissue specificity">
    <text evidence="9">Expressed in fibroblasts but not in melanocytes or keratinocytes.</text>
</comment>
<comment type="disease" evidence="7">
    <disease id="DI-03982">
        <name>Van Maldergem syndrome 1</name>
        <acronym>VMLDS1</acronym>
        <description>An autosomal recessive disorder characterized by intellectual disability, typical craniofacial features, auditory malformations resulting in hearing loss, and skeletal and limb malformations. Some patients have renal hypoplasia. Brain MRI typically shows periventricular nodular heterotopia.</description>
        <dbReference type="MIM" id="601390"/>
    </disease>
    <text>The disease is caused by variants affecting the gene represented in this entry.</text>
</comment>
<comment type="disease" evidence="8">
    <disease id="DI-04583">
        <name>Mitral valve prolapse 2</name>
        <acronym>MVP2</acronym>
        <description>A form of mitral valve prolapse, a valvular heart disease characterized by abnormally elongated and thickened mitral valve leaflets, that typically show myxomatous degeneration with increased leaflet compliance. It is associated with mitral regurgitation. Myxomatous mitral valves have an abnormal layered architecture characterized by loose collagen in fibrosa, expanded spongiosa strongly positive for proteoglycans, and disrupted elastin in atrialis. In classic mitral valve prolapse, leaflets are at least 5 mm thick, whereas in the non-classic form, they are less than 5 mm thick. Severe classic mitral valve prolapse is strongly associated with arrhythmias, endocarditis, heart failure, and need for valve surgery. MVP2 inheritance is autosomal dominant.</description>
        <dbReference type="MIM" id="607829"/>
    </disease>
    <text>The disease is caused by variants affecting the gene represented in this entry.</text>
</comment>
<comment type="sequence caution" evidence="10">
    <conflict type="erroneous initiation">
        <sequence resource="EMBL-CDS" id="BAB61903"/>
    </conflict>
</comment>
<sequence length="3298" mass="346181">MQKELGIVPSCPGMKSPRPHLLLPLLLLLLLLLGAGVPGAWGQAGSLDLQIDEEQPAGTLIGDISAGLPAGTAAPLMYFISAQEGSGVGTDLAIDEHSGVVRTARVLDREQRDRYRFTAVTPDGATVEVTVRVADINDHAPAFPQARAALQVPEHTAFGTRYPLEPARDADAGRLGTQGYALSGDGAGETFRLETRPGPDGTPVPELVVTGELDRENRSHYMLQLEAYDGGSPPRRAQALLDVTLLDINDHAPAFNQSRYHAVVSESLAPGSPVLQVFASDADAGVNGAVTYEINRRQSEGDGPFSIDAHTGLLQLERPLDFEQRRVHELVVQARDGGAHPELGSAFVTVHVRDANDNQPSMTVIFLSADGSPQVSEAAPPGQLVARISVSDPDDGDFAHVNVSLEGGEGHFALSTQDSVIYLVCVARRLDREERDAYNLRVTATDSGSPPLRAEAAFVLHVTDVNDNAPAFDRQLYRPEPLPEVALPGSFVVRVTARDPDQGTNGQVTYSLAPGAHTHWFSIDPTSGIITTAASLDYELEPQPQLIVVATDGGLPPLASSATVSVALQDVNDNEPQFQRTFYNASLPEGTQPGTCFLQVTATDADSGPFGLLSYSLGAGLGSSGSPPFRIDAHSGDVCTTRTLDRDQGPSSFDFTVTAVDGGGLKSMVYVKVFLSDENDNPPQFYPREYAASISAQSPPGTAVLRLRAHDPDQGSHGRLSYHILAGNSPPLFTLDEQSGLLTVAWPLARRANSVVQLEIGAEDGGGLQAEPSARVDISIVPGTPTPPIFEQLQYVFSVPEDVAPGTSVGIVQAHNPPGRLAPVTLSLSGGDPRGLFSLDAVSGLLQTLRPLDRELLGPVLELEVRAGSGVPPAFAVARVRVLLDDVNDNSPAFPAPEDTVLLPPNTAPGTPIYTLRALDPDSGVNSRVTFTLLAGGGGAFTVDPTTGHVRLMRPLGPSGGPAHELELEARDGGSPPRTSHFRLRVVVQDVGTRGLAPRFNSPTYRVDLPSGTTAGTQVLQVQAQAPDGGPITYHLAAEGASSPFGLEPQSGWLWVRAALDREAQELYILKVMAVSGSKAELGQQTGTATVRVSILNQNEHSPRLSEDPTFLAVAENQPPGTSVGRVFATDRDSGPNGRLTYSLQQLSEDSKAFRIHPQTGEVTTLQTLDREQQSSYQLLVQVQDGGSPPRSTTGTVHVAVLDLNDNSPTFLQASGAAGGGLPIQVPDRVPPGTLVTTLQAKDPDEGENGTILYTLTGPGSELFSLHPHSGELLTAAPLIRAERPHYVLTLSAHDQGSPPRSASLQLLVQVLPSARLAEPPPDLAERDPAAPVPVVLTVTAAEGLRPGSLLGSVAAPEPAGVGALTYTLVGGADPEGTFALDAASGRLYLARPLDFEAGPPWRALTVRAEGPGGAGARLLRVQVQVQDENEHAPAFARDPLALALPENPEPGAALYTFRASDADGPGPNSDVRYRLLRQEPPVPALRLDARTGALSAPRGLDRETTPALLLLVEATDRPANASRRRAARVSARVFVTDENDNAPVFASPSRVRLPEDQPPGPAALHVVARDPDLGEAARVSYRLASGGDGHFRLHSSTGALSVVRPLDREQRAEHVLTVVASDHGSPPRSATQVLTVSVADVNDEAPTFQQQEYSVLLRENNPPGTSLLTLRATDPDVGANGQVTYGGVSSESFSLDPDTGVLTTLRALDREEQEEINLTVYAQDRGSPPQLTHVTVRVAVEDENDHAPTFGSAHLSLEVPEGQDPQTLTMLRASDPDVGANGQLQYRILDGDPSGAFVLDLASGEFGTMRPLDREVEPAFQLRIEARDGGQPALSATLLLTVTVLDANDHAPAFPVPAYSVEVPEDVPAGTLLLQLQAHDPDAGANGHVTYYLGAGTAGAFLLEPSSGELRTAAALDREQCPSYTFSVSAVDGAAAGPLSTTVSVTITVRDVNDHAPTFPTSPLRLRLPRPGPSFSTPTLALATLRAEDRDAGANASILYRLAGTPPPGTTVDSYTGEIRVARSPVALGPRDRVLFIVATDLGRPARSATGVIIVGLQGEAERGPRFPRASSEATIRENAPPGTPIVSPRAVHAGGTNGPITYSILSGNEKGTFSIQPSTGAITVRSAEGLDFEVSPRLRLVLQAESGGAFAFTVLTLTLQDANDNAPRFLRPHYVAFLPESRPLEGPLLQVEADDLDQGSGGQISYSLAASQPARGLFHVDPTTGTITTTAILDREIWAETRLVLMATDRGSPALVGSATLTVMVIDTNDNRPTIPQPWELRVSEDALLGSEIAQVTGNDVDSGPVLWYVLSPSGPQDPFSVGRYGGRVSLTGPLDFEQCDRYQLQLLAHDGPHEGRANLTVLVEDVNDNAPAFSQSLYQVMLLEHTPPGSAILSVSATDRDSGANGHISYHLASPADGFSVDPNNGTLFTIVGTVALGHDGSGAVDVVLEARDHGAPGRAARATVHVQLQDQNDHAPSFTLSHYRVAVTEDLPPGSTLLTLEATDADGSRSHAAVDYSIISGNWGRVFQLEPRLAEAGESAGPGPRALGCLVLLEPLDFESLTQYNLTVAAADRGQPPQSSVVPVTVTVLDVNDNPPVFTRASYRVTVPEDTPVGAELLHVEASDADPGPHGLVRFTVSSGDPSGLFELDESSGTLRLAHALDCETQARHQLVVQAADPAGAHFALAPVTIEVQDVNDHGPAFPLNLLSTSVAENQPPGTLVTTLHAIDGDAGAFGRLRYSLLEAGPGPEGREAFALNSSTGELRARVPFDYEHTESFRLLVGAADAGNLSASVTVSVLVTGEDEYDPVFLAPAFHFQVPEGARRGHSLGHVQATDEDGGADGLVLYSLATSSPYFGINQTTGALYLRVDSRAPGSGTATSGGGGRTRREAPRELRLEVIARGPLPGSRSATVPVTVDITHTALGLAPDLNLLLVGAVAASLGVVVVLALAALVLGLVRARSRKAEAAPGPMSQAAPLASDSLQKLGREPPSPPPSEHLYHQTLPSYGGPGAGGPYPRGGSLDPSHSSGRGSAEAAEDDEIRMINEFPRVASVASSLAARGPDSGIQQDADGLSDTSCEPPAPDTWYKGRKAGLLLPGAGATLYREEGPPATATAFLGGCGLSPAPTGDYGFPADGKPCVAGALTAIVAGEEELRGSYNWDYLLSWCPQFQPLASVFTEIARLKDEARPCPPAPRIDPPPLITAVAHPGAKSVPPKPANTAAARAIFPPASHRSPISHEGSLSSAAMSPSFSPSLSPLAARSPVVSPFGVAQGPSASALSAESGLEPPDDTELHI</sequence>
<name>PCD16_HUMAN</name>
<feature type="signal peptide" evidence="3">
    <location>
        <begin position="1"/>
        <end position="42"/>
    </location>
</feature>
<feature type="chain" id="PRO_0000004000" description="Protocadherin-16">
    <location>
        <begin position="43"/>
        <end position="3298"/>
    </location>
</feature>
<feature type="topological domain" description="Extracellular" evidence="3">
    <location>
        <begin position="43"/>
        <end position="2940"/>
    </location>
</feature>
<feature type="transmembrane region" description="Helical" evidence="3">
    <location>
        <begin position="2941"/>
        <end position="2961"/>
    </location>
</feature>
<feature type="topological domain" description="Cytoplasmic" evidence="3">
    <location>
        <begin position="2962"/>
        <end position="3298"/>
    </location>
</feature>
<feature type="domain" description="Cadherin 1" evidence="4">
    <location>
        <begin position="43"/>
        <end position="143"/>
    </location>
</feature>
<feature type="domain" description="Cadherin 2" evidence="4">
    <location>
        <begin position="144"/>
        <end position="255"/>
    </location>
</feature>
<feature type="domain" description="Cadherin 3" evidence="4">
    <location>
        <begin position="256"/>
        <end position="362"/>
    </location>
</feature>
<feature type="domain" description="Cadherin 4" evidence="4">
    <location>
        <begin position="367"/>
        <end position="472"/>
    </location>
</feature>
<feature type="domain" description="Cadherin 5" evidence="4">
    <location>
        <begin position="474"/>
        <end position="578"/>
    </location>
</feature>
<feature type="domain" description="Cadherin 6" evidence="4">
    <location>
        <begin position="579"/>
        <end position="685"/>
    </location>
</feature>
<feature type="domain" description="Cadherin 7" evidence="4">
    <location>
        <begin position="686"/>
        <end position="790"/>
    </location>
</feature>
<feature type="domain" description="Cadherin 8" evidence="4">
    <location>
        <begin position="791"/>
        <end position="894"/>
    </location>
</feature>
<feature type="domain" description="Cadherin 9" evidence="4">
    <location>
        <begin position="895"/>
        <end position="1000"/>
    </location>
</feature>
<feature type="domain" description="Cadherin 10" evidence="4">
    <location>
        <begin position="1001"/>
        <end position="1111"/>
    </location>
</feature>
<feature type="domain" description="Cadherin 11" evidence="4">
    <location>
        <begin position="1112"/>
        <end position="1211"/>
    </location>
</feature>
<feature type="domain" description="Cadherin 12" evidence="4">
    <location>
        <begin position="1218"/>
        <end position="1324"/>
    </location>
</feature>
<feature type="domain" description="Cadherin 13" evidence="4">
    <location>
        <begin position="1333"/>
        <end position="1436"/>
    </location>
</feature>
<feature type="domain" description="Cadherin 14" evidence="4">
    <location>
        <begin position="1437"/>
        <end position="1546"/>
    </location>
</feature>
<feature type="domain" description="Cadherin 15" evidence="4">
    <location>
        <begin position="1547"/>
        <end position="1649"/>
    </location>
</feature>
<feature type="domain" description="Cadherin 16" evidence="4">
    <location>
        <begin position="1650"/>
        <end position="1751"/>
    </location>
</feature>
<feature type="domain" description="Cadherin 17" evidence="4">
    <location>
        <begin position="1752"/>
        <end position="1855"/>
    </location>
</feature>
<feature type="domain" description="Cadherin 18" evidence="4">
    <location>
        <begin position="1856"/>
        <end position="1960"/>
    </location>
</feature>
<feature type="domain" description="Cadherin 19" evidence="4">
    <location>
        <begin position="1965"/>
        <end position="2068"/>
    </location>
</feature>
<feature type="domain" description="Cadherin 20" evidence="4">
    <location>
        <begin position="2069"/>
        <end position="2171"/>
    </location>
</feature>
<feature type="domain" description="Cadherin 21" evidence="4">
    <location>
        <begin position="2172"/>
        <end position="2277"/>
    </location>
</feature>
<feature type="domain" description="Cadherin 22" evidence="4">
    <location>
        <begin position="2278"/>
        <end position="2376"/>
    </location>
</feature>
<feature type="domain" description="Cadherin 23" evidence="4">
    <location>
        <begin position="2377"/>
        <end position="2482"/>
    </location>
</feature>
<feature type="domain" description="Cadherin 24" evidence="4">
    <location>
        <begin position="2483"/>
        <end position="2602"/>
    </location>
</feature>
<feature type="domain" description="Cadherin 25" evidence="4">
    <location>
        <begin position="2603"/>
        <end position="2706"/>
    </location>
</feature>
<feature type="domain" description="Cadherin 26" evidence="4">
    <location>
        <begin position="2707"/>
        <end position="2813"/>
    </location>
</feature>
<feature type="domain" description="Cadherin 27" evidence="4">
    <location>
        <begin position="2814"/>
        <end position="2933"/>
    </location>
</feature>
<feature type="region of interest" description="Disordered" evidence="5">
    <location>
        <begin position="2065"/>
        <end position="2094"/>
    </location>
</feature>
<feature type="region of interest" description="Disordered" evidence="5">
    <location>
        <begin position="2986"/>
        <end position="3040"/>
    </location>
</feature>
<feature type="region of interest" description="Disordered" evidence="5">
    <location>
        <begin position="3062"/>
        <end position="3082"/>
    </location>
</feature>
<feature type="region of interest" description="Disordered" evidence="5">
    <location>
        <begin position="3233"/>
        <end position="3298"/>
    </location>
</feature>
<feature type="compositionally biased region" description="Gly residues" evidence="5">
    <location>
        <begin position="3011"/>
        <end position="3020"/>
    </location>
</feature>
<feature type="compositionally biased region" description="Low complexity" evidence="5">
    <location>
        <begin position="3244"/>
        <end position="3266"/>
    </location>
</feature>
<feature type="compositionally biased region" description="Low complexity" evidence="5">
    <location>
        <begin position="3276"/>
        <end position="3289"/>
    </location>
</feature>
<feature type="modified residue" description="Phosphoserine" evidence="2">
    <location>
        <position position="3055"/>
    </location>
</feature>
<feature type="glycosylation site" description="N-linked (GlcNAc...) asparagine" evidence="3">
    <location>
        <position position="217"/>
    </location>
</feature>
<feature type="glycosylation site" description="N-linked (GlcNAc...) asparagine" evidence="3">
    <location>
        <position position="256"/>
    </location>
</feature>
<feature type="glycosylation site" description="N-linked (GlcNAc...) asparagine" evidence="3">
    <location>
        <position position="402"/>
    </location>
</feature>
<feature type="glycosylation site" description="N-linked (GlcNAc...) asparagine" evidence="3">
    <location>
        <position position="584"/>
    </location>
</feature>
<feature type="glycosylation site" description="N-linked (GlcNAc...) asparagine" evidence="3">
    <location>
        <position position="1249"/>
    </location>
</feature>
<feature type="glycosylation site" description="N-linked (GlcNAc...) asparagine" evidence="3">
    <location>
        <position position="1521"/>
    </location>
</feature>
<feature type="glycosylation site" description="N-linked (GlcNAc...) asparagine" evidence="3">
    <location>
        <position position="1718"/>
    </location>
</feature>
<feature type="glycosylation site" description="N-linked (GlcNAc...) asparagine" evidence="3">
    <location>
        <position position="1996"/>
    </location>
</feature>
<feature type="glycosylation site" description="N-linked (GlcNAc...) asparagine" evidence="3">
    <location>
        <position position="2361"/>
    </location>
</feature>
<feature type="glycosylation site" description="N-linked (GlcNAc...) asparagine" evidence="3">
    <location>
        <position position="2428"/>
    </location>
</feature>
<feature type="glycosylation site" description="N-linked (GlcNAc...) asparagine" evidence="3">
    <location>
        <position position="2569"/>
    </location>
</feature>
<feature type="glycosylation site" description="N-linked (GlcNAc...) asparagine" evidence="3">
    <location>
        <position position="2761"/>
    </location>
</feature>
<feature type="glycosylation site" description="N-linked (GlcNAc...) asparagine" evidence="3">
    <location>
        <position position="2792"/>
    </location>
</feature>
<feature type="glycosylation site" description="N-linked (GlcNAc...) asparagine" evidence="3">
    <location>
        <position position="2862"/>
    </location>
</feature>
<feature type="sequence variant" id="VAR_075048" description="In MVP2; uncertain significance; has no significant effect on protein levels; dbSNP:rs145099391." evidence="8">
    <original>P</original>
    <variation>L</variation>
    <location>
        <position position="197"/>
    </location>
</feature>
<feature type="sequence variant" id="VAR_036110" description="In a colorectal cancer sample; somatic mutation; dbSNP:rs148882462." evidence="6">
    <original>R</original>
    <variation>W</variation>
    <location>
        <position position="1583"/>
    </location>
</feature>
<feature type="sequence variant" id="VAR_048577" description="In dbSNP:rs4758443.">
    <original>T</original>
    <variation>M</variation>
    <location>
        <position position="1949"/>
    </location>
</feature>
<feature type="sequence variant" id="VAR_061074" description="In dbSNP:rs56920123.">
    <original>L</original>
    <variation>Q</variation>
    <location>
        <position position="2172"/>
    </location>
</feature>
<feature type="sequence variant" id="VAR_075049" description="In MVP2; loss-of-function mutation; results in reduced protein levels; results in increased protein degradation; dbSNP:rs768737101." evidence="8">
    <original>R</original>
    <variation>C</variation>
    <location>
        <position position="2330"/>
    </location>
</feature>
<feature type="sequence variant" id="VAR_048578" description="In dbSNP:rs7924553.">
    <original>V</original>
    <variation>I</variation>
    <location>
        <position position="2331"/>
    </location>
</feature>
<feature type="sequence variant" id="VAR_048579" description="In dbSNP:rs2659875.">
    <original>R</original>
    <variation>C</variation>
    <location>
        <position position="2359"/>
    </location>
</feature>
<feature type="sequence variant" id="VAR_070928" description="In VMLDS1; dbSNP:rs483352919." evidence="7">
    <original>N</original>
    <variation>I</variation>
    <location>
        <position position="2370"/>
    </location>
</feature>
<feature type="sequence variant" id="VAR_075050" description="In MVP2; uncertain significance; loss-of-function mutation; results in reduced protein levels; results in increased protein degradation; dbSNP:rs201457110." evidence="8">
    <original>R</original>
    <variation>H</variation>
    <location>
        <position position="2513"/>
    </location>
</feature>
<feature type="strand" evidence="11">
    <location>
        <begin position="44"/>
        <end position="52"/>
    </location>
</feature>
<feature type="strand" evidence="11">
    <location>
        <begin position="60"/>
        <end position="63"/>
    </location>
</feature>
<feature type="helix" evidence="11">
    <location>
        <begin position="64"/>
        <end position="67"/>
    </location>
</feature>
<feature type="strand" evidence="11">
    <location>
        <begin position="79"/>
        <end position="81"/>
    </location>
</feature>
<feature type="helix" evidence="11">
    <location>
        <begin position="88"/>
        <end position="91"/>
    </location>
</feature>
<feature type="strand" evidence="11">
    <location>
        <begin position="92"/>
        <end position="94"/>
    </location>
</feature>
<feature type="turn" evidence="11">
    <location>
        <begin position="96"/>
        <end position="98"/>
    </location>
</feature>
<feature type="strand" evidence="11">
    <location>
        <begin position="100"/>
        <end position="105"/>
    </location>
</feature>
<feature type="turn" evidence="11">
    <location>
        <begin position="109"/>
        <end position="111"/>
    </location>
</feature>
<feature type="strand" evidence="11">
    <location>
        <begin position="114"/>
        <end position="120"/>
    </location>
</feature>
<feature type="strand" evidence="11">
    <location>
        <begin position="126"/>
        <end position="134"/>
    </location>
</feature>
<feature type="strand" evidence="11">
    <location>
        <begin position="146"/>
        <end position="153"/>
    </location>
</feature>
<feature type="strand" evidence="11">
    <location>
        <begin position="161"/>
        <end position="163"/>
    </location>
</feature>
<feature type="helix" evidence="11">
    <location>
        <begin position="173"/>
        <end position="175"/>
    </location>
</feature>
<feature type="strand" evidence="11">
    <location>
        <begin position="176"/>
        <end position="184"/>
    </location>
</feature>
<feature type="turn" evidence="11">
    <location>
        <begin position="188"/>
        <end position="190"/>
    </location>
</feature>
<feature type="strand" evidence="11">
    <location>
        <begin position="191"/>
        <end position="197"/>
    </location>
</feature>
<feature type="helix" evidence="11">
    <location>
        <begin position="199"/>
        <end position="201"/>
    </location>
</feature>
<feature type="strand" evidence="11">
    <location>
        <begin position="203"/>
        <end position="209"/>
    </location>
</feature>
<feature type="turn" evidence="11">
    <location>
        <begin position="215"/>
        <end position="217"/>
    </location>
</feature>
<feature type="strand" evidence="11">
    <location>
        <begin position="220"/>
        <end position="229"/>
    </location>
</feature>
<feature type="strand" evidence="11">
    <location>
        <begin position="231"/>
        <end position="233"/>
    </location>
</feature>
<feature type="strand" evidence="11">
    <location>
        <begin position="236"/>
        <end position="246"/>
    </location>
</feature>
<feature type="strand" evidence="11">
    <location>
        <begin position="254"/>
        <end position="256"/>
    </location>
</feature>
<feature type="strand" evidence="11">
    <location>
        <begin position="258"/>
        <end position="265"/>
    </location>
</feature>
<feature type="strand" evidence="11">
    <location>
        <begin position="273"/>
        <end position="276"/>
    </location>
</feature>
<feature type="helix" evidence="11">
    <location>
        <begin position="285"/>
        <end position="288"/>
    </location>
</feature>
<feature type="strand" evidence="11">
    <location>
        <begin position="291"/>
        <end position="294"/>
    </location>
</feature>
<feature type="turn" evidence="11">
    <location>
        <begin position="296"/>
        <end position="298"/>
    </location>
</feature>
<feature type="strand" evidence="11">
    <location>
        <begin position="305"/>
        <end position="307"/>
    </location>
</feature>
<feature type="turn" evidence="11">
    <location>
        <begin position="309"/>
        <end position="311"/>
    </location>
</feature>
<feature type="strand" evidence="11">
    <location>
        <begin position="313"/>
        <end position="316"/>
    </location>
</feature>
<feature type="turn" evidence="11">
    <location>
        <begin position="322"/>
        <end position="324"/>
    </location>
</feature>
<feature type="strand" evidence="11">
    <location>
        <begin position="326"/>
        <end position="335"/>
    </location>
</feature>
<feature type="strand" evidence="11">
    <location>
        <begin position="338"/>
        <end position="340"/>
    </location>
</feature>
<feature type="strand" evidence="11">
    <location>
        <begin position="343"/>
        <end position="353"/>
    </location>
</feature>
<evidence type="ECO:0000250" key="1"/>
<evidence type="ECO:0000250" key="2">
    <source>
        <dbReference type="UniProtKB" id="E9PVD3"/>
    </source>
</evidence>
<evidence type="ECO:0000255" key="3"/>
<evidence type="ECO:0000255" key="4">
    <source>
        <dbReference type="PROSITE-ProRule" id="PRU00043"/>
    </source>
</evidence>
<evidence type="ECO:0000256" key="5">
    <source>
        <dbReference type="SAM" id="MobiDB-lite"/>
    </source>
</evidence>
<evidence type="ECO:0000269" key="6">
    <source>
    </source>
</evidence>
<evidence type="ECO:0000269" key="7">
    <source>
    </source>
</evidence>
<evidence type="ECO:0000269" key="8">
    <source>
    </source>
</evidence>
<evidence type="ECO:0000269" key="9">
    <source>
    </source>
</evidence>
<evidence type="ECO:0000305" key="10"/>
<evidence type="ECO:0007829" key="11">
    <source>
        <dbReference type="PDB" id="8EGW"/>
    </source>
</evidence>
<keyword id="KW-0002">3D-structure</keyword>
<keyword id="KW-0106">Calcium</keyword>
<keyword id="KW-0130">Cell adhesion</keyword>
<keyword id="KW-1003">Cell membrane</keyword>
<keyword id="KW-0209">Deafness</keyword>
<keyword id="KW-0225">Disease variant</keyword>
<keyword id="KW-0325">Glycoprotein</keyword>
<keyword id="KW-0991">Intellectual disability</keyword>
<keyword id="KW-0472">Membrane</keyword>
<keyword id="KW-0597">Phosphoprotein</keyword>
<keyword id="KW-1267">Proteomics identification</keyword>
<keyword id="KW-1185">Reference proteome</keyword>
<keyword id="KW-0677">Repeat</keyword>
<keyword id="KW-0732">Signal</keyword>
<keyword id="KW-0812">Transmembrane</keyword>
<keyword id="KW-1133">Transmembrane helix</keyword>